<dbReference type="EMBL" id="D21800">
    <property type="protein sequence ID" value="BAA04824.1"/>
    <property type="molecule type" value="mRNA"/>
</dbReference>
<dbReference type="EMBL" id="BC084723">
    <property type="protein sequence ID" value="AAH84723.1"/>
    <property type="molecule type" value="mRNA"/>
</dbReference>
<dbReference type="PIR" id="S40468">
    <property type="entry name" value="S40468"/>
</dbReference>
<dbReference type="RefSeq" id="NP_058981.1">
    <property type="nucleotide sequence ID" value="NM_017285.2"/>
</dbReference>
<dbReference type="PDB" id="6EPC">
    <property type="method" value="EM"/>
    <property type="resolution" value="12.30 A"/>
    <property type="chains" value="3=1-205"/>
</dbReference>
<dbReference type="PDB" id="6EPD">
    <property type="method" value="EM"/>
    <property type="resolution" value="15.40 A"/>
    <property type="chains" value="3=1-205"/>
</dbReference>
<dbReference type="PDB" id="6EPE">
    <property type="method" value="EM"/>
    <property type="resolution" value="12.80 A"/>
    <property type="chains" value="3=1-205"/>
</dbReference>
<dbReference type="PDB" id="6EPF">
    <property type="method" value="EM"/>
    <property type="resolution" value="11.80 A"/>
    <property type="chains" value="3=1-205"/>
</dbReference>
<dbReference type="PDB" id="6TU3">
    <property type="method" value="EM"/>
    <property type="resolution" value="2.70 A"/>
    <property type="chains" value="J/X=1-205"/>
</dbReference>
<dbReference type="PDBsum" id="6EPC"/>
<dbReference type="PDBsum" id="6EPD"/>
<dbReference type="PDBsum" id="6EPE"/>
<dbReference type="PDBsum" id="6EPF"/>
<dbReference type="PDBsum" id="6TU3"/>
<dbReference type="EMDB" id="EMD-10586"/>
<dbReference type="EMDB" id="EMD-3913"/>
<dbReference type="EMDB" id="EMD-3914"/>
<dbReference type="EMDB" id="EMD-3915"/>
<dbReference type="EMDB" id="EMD-3916"/>
<dbReference type="SMR" id="P40112"/>
<dbReference type="BioGRID" id="248297">
    <property type="interactions" value="3"/>
</dbReference>
<dbReference type="ComplexPortal" id="CPX-8965">
    <property type="entry name" value="30S proteasome complex"/>
</dbReference>
<dbReference type="FunCoup" id="P40112">
    <property type="interactions" value="3044"/>
</dbReference>
<dbReference type="IntAct" id="P40112">
    <property type="interactions" value="1"/>
</dbReference>
<dbReference type="STRING" id="10116.ENSRNOP00000073805"/>
<dbReference type="MEROPS" id="T01.983"/>
<dbReference type="iPTMnet" id="P40112"/>
<dbReference type="PhosphoSitePlus" id="P40112"/>
<dbReference type="jPOST" id="P40112"/>
<dbReference type="PaxDb" id="10116-ENSRNOP00000017377"/>
<dbReference type="DNASU" id="29676"/>
<dbReference type="GeneID" id="29676"/>
<dbReference type="KEGG" id="rno:29676"/>
<dbReference type="UCSC" id="RGD:61875">
    <property type="organism name" value="rat"/>
</dbReference>
<dbReference type="AGR" id="RGD:61875"/>
<dbReference type="CTD" id="5691"/>
<dbReference type="RGD" id="61875">
    <property type="gene designation" value="Psmb3"/>
</dbReference>
<dbReference type="VEuPathDB" id="HostDB:ENSRNOG00000052730"/>
<dbReference type="eggNOG" id="KOG0180">
    <property type="taxonomic scope" value="Eukaryota"/>
</dbReference>
<dbReference type="HOGENOM" id="CLU_035750_10_0_1"/>
<dbReference type="InParanoid" id="P40112"/>
<dbReference type="OrthoDB" id="204949at2759"/>
<dbReference type="PhylomeDB" id="P40112"/>
<dbReference type="Reactome" id="R-RNO-1169091">
    <property type="pathway name" value="Activation of NF-kappaB in B cells"/>
</dbReference>
<dbReference type="Reactome" id="R-RNO-1234176">
    <property type="pathway name" value="Oxygen-dependent proline hydroxylation of Hypoxia-inducible Factor Alpha"/>
</dbReference>
<dbReference type="Reactome" id="R-RNO-1236978">
    <property type="pathway name" value="Cross-presentation of soluble exogenous antigens (endosomes)"/>
</dbReference>
<dbReference type="Reactome" id="R-RNO-174084">
    <property type="pathway name" value="Autodegradation of Cdh1 by Cdh1:APC/C"/>
</dbReference>
<dbReference type="Reactome" id="R-RNO-174113">
    <property type="pathway name" value="SCF-beta-TrCP mediated degradation of Emi1"/>
</dbReference>
<dbReference type="Reactome" id="R-RNO-174154">
    <property type="pathway name" value="APC/C:Cdc20 mediated degradation of Securin"/>
</dbReference>
<dbReference type="Reactome" id="R-RNO-174178">
    <property type="pathway name" value="APC/C:Cdh1 mediated degradation of Cdc20 and other APC/C:Cdh1 targeted proteins in late mitosis/early G1"/>
</dbReference>
<dbReference type="Reactome" id="R-RNO-174184">
    <property type="pathway name" value="Cdc20:Phospho-APC/C mediated degradation of Cyclin A"/>
</dbReference>
<dbReference type="Reactome" id="R-RNO-187577">
    <property type="pathway name" value="SCF(Skp2)-mediated degradation of p27/p21"/>
</dbReference>
<dbReference type="Reactome" id="R-RNO-195253">
    <property type="pathway name" value="Degradation of beta-catenin by the destruction complex"/>
</dbReference>
<dbReference type="Reactome" id="R-RNO-2467813">
    <property type="pathway name" value="Separation of Sister Chromatids"/>
</dbReference>
<dbReference type="Reactome" id="R-RNO-349425">
    <property type="pathway name" value="Autodegradation of the E3 ubiquitin ligase COP1"/>
</dbReference>
<dbReference type="Reactome" id="R-RNO-350562">
    <property type="pathway name" value="Regulation of ornithine decarboxylase (ODC)"/>
</dbReference>
<dbReference type="Reactome" id="R-RNO-382556">
    <property type="pathway name" value="ABC-family proteins mediated transport"/>
</dbReference>
<dbReference type="Reactome" id="R-RNO-450408">
    <property type="pathway name" value="AUF1 (hnRNP D0) binds and destabilizes mRNA"/>
</dbReference>
<dbReference type="Reactome" id="R-RNO-4608870">
    <property type="pathway name" value="Asymmetric localization of PCP proteins"/>
</dbReference>
<dbReference type="Reactome" id="R-RNO-4641257">
    <property type="pathway name" value="Degradation of AXIN"/>
</dbReference>
<dbReference type="Reactome" id="R-RNO-4641258">
    <property type="pathway name" value="Degradation of DVL"/>
</dbReference>
<dbReference type="Reactome" id="R-RNO-5358346">
    <property type="pathway name" value="Hedgehog ligand biogenesis"/>
</dbReference>
<dbReference type="Reactome" id="R-RNO-5607761">
    <property type="pathway name" value="Dectin-1 mediated noncanonical NF-kB signaling"/>
</dbReference>
<dbReference type="Reactome" id="R-RNO-5610780">
    <property type="pathway name" value="Degradation of GLI1 by the proteasome"/>
</dbReference>
<dbReference type="Reactome" id="R-RNO-5610785">
    <property type="pathway name" value="GLI3 is processed to GLI3R by the proteasome"/>
</dbReference>
<dbReference type="Reactome" id="R-RNO-5632684">
    <property type="pathway name" value="Hedgehog 'on' state"/>
</dbReference>
<dbReference type="Reactome" id="R-RNO-5658442">
    <property type="pathway name" value="Regulation of RAS by GAPs"/>
</dbReference>
<dbReference type="Reactome" id="R-RNO-5668541">
    <property type="pathway name" value="TNFR2 non-canonical NF-kB pathway"/>
</dbReference>
<dbReference type="Reactome" id="R-RNO-5676590">
    <property type="pathway name" value="NIK--&gt;noncanonical NF-kB signaling"/>
</dbReference>
<dbReference type="Reactome" id="R-RNO-5687128">
    <property type="pathway name" value="MAPK6/MAPK4 signaling"/>
</dbReference>
<dbReference type="Reactome" id="R-RNO-5689603">
    <property type="pathway name" value="UCH proteinases"/>
</dbReference>
<dbReference type="Reactome" id="R-RNO-5689880">
    <property type="pathway name" value="Ub-specific processing proteases"/>
</dbReference>
<dbReference type="Reactome" id="R-RNO-68867">
    <property type="pathway name" value="Assembly of the pre-replicative complex"/>
</dbReference>
<dbReference type="Reactome" id="R-RNO-68949">
    <property type="pathway name" value="Orc1 removal from chromatin"/>
</dbReference>
<dbReference type="Reactome" id="R-RNO-69017">
    <property type="pathway name" value="CDK-mediated phosphorylation and removal of Cdc6"/>
</dbReference>
<dbReference type="Reactome" id="R-RNO-69481">
    <property type="pathway name" value="G2/M Checkpoints"/>
</dbReference>
<dbReference type="Reactome" id="R-RNO-69601">
    <property type="pathway name" value="Ubiquitin Mediated Degradation of Phosphorylated Cdc25A"/>
</dbReference>
<dbReference type="Reactome" id="R-RNO-75815">
    <property type="pathway name" value="Ubiquitin-dependent degradation of Cyclin D"/>
</dbReference>
<dbReference type="Reactome" id="R-RNO-8852276">
    <property type="pathway name" value="The role of GTSE1 in G2/M progression after G2 checkpoint"/>
</dbReference>
<dbReference type="Reactome" id="R-RNO-8854050">
    <property type="pathway name" value="FBXL7 down-regulates AURKA during mitotic entry and in early mitosis"/>
</dbReference>
<dbReference type="Reactome" id="R-RNO-8939236">
    <property type="pathway name" value="RUNX1 regulates transcription of genes involved in differentiation of HSCs"/>
</dbReference>
<dbReference type="Reactome" id="R-RNO-8941858">
    <property type="pathway name" value="Regulation of RUNX3 expression and activity"/>
</dbReference>
<dbReference type="Reactome" id="R-RNO-8948751">
    <property type="pathway name" value="Regulation of PTEN stability and activity"/>
</dbReference>
<dbReference type="Reactome" id="R-RNO-8951664">
    <property type="pathway name" value="Neddylation"/>
</dbReference>
<dbReference type="Reactome" id="R-RNO-9755511">
    <property type="pathway name" value="KEAP1-NFE2L2 pathway"/>
</dbReference>
<dbReference type="Reactome" id="R-RNO-9762114">
    <property type="pathway name" value="GSK3B and BTRC:CUL1-mediated-degradation of NFE2L2"/>
</dbReference>
<dbReference type="Reactome" id="R-RNO-983168">
    <property type="pathway name" value="Antigen processing: Ubiquitination &amp; Proteasome degradation"/>
</dbReference>
<dbReference type="Reactome" id="R-RNO-9907900">
    <property type="pathway name" value="Proteasome assembly"/>
</dbReference>
<dbReference type="PRO" id="PR:P40112"/>
<dbReference type="Proteomes" id="UP000002494">
    <property type="component" value="Chromosome 10"/>
</dbReference>
<dbReference type="Bgee" id="ENSRNOG00000052730">
    <property type="expression patterns" value="Expressed in thymus and 20 other cell types or tissues"/>
</dbReference>
<dbReference type="GO" id="GO:0005737">
    <property type="term" value="C:cytoplasm"/>
    <property type="evidence" value="ECO:0000266"/>
    <property type="project" value="RGD"/>
</dbReference>
<dbReference type="GO" id="GO:0005829">
    <property type="term" value="C:cytosol"/>
    <property type="evidence" value="ECO:0000318"/>
    <property type="project" value="GO_Central"/>
</dbReference>
<dbReference type="GO" id="GO:0005634">
    <property type="term" value="C:nucleus"/>
    <property type="evidence" value="ECO:0000266"/>
    <property type="project" value="RGD"/>
</dbReference>
<dbReference type="GO" id="GO:0000502">
    <property type="term" value="C:proteasome complex"/>
    <property type="evidence" value="ECO:0000266"/>
    <property type="project" value="RGD"/>
</dbReference>
<dbReference type="GO" id="GO:0005839">
    <property type="term" value="C:proteasome core complex"/>
    <property type="evidence" value="ECO:0000250"/>
    <property type="project" value="UniProtKB"/>
</dbReference>
<dbReference type="GO" id="GO:0019774">
    <property type="term" value="C:proteasome core complex, beta-subunit complex"/>
    <property type="evidence" value="ECO:0000250"/>
    <property type="project" value="UniProtKB"/>
</dbReference>
<dbReference type="GO" id="GO:0043161">
    <property type="term" value="P:proteasome-mediated ubiquitin-dependent protein catabolic process"/>
    <property type="evidence" value="ECO:0000318"/>
    <property type="project" value="GO_Central"/>
</dbReference>
<dbReference type="CDD" id="cd03759">
    <property type="entry name" value="proteasome_beta_type_3"/>
    <property type="match status" value="1"/>
</dbReference>
<dbReference type="FunFam" id="3.60.20.10:FF:000003">
    <property type="entry name" value="Proteasome subunit beta type-3"/>
    <property type="match status" value="1"/>
</dbReference>
<dbReference type="Gene3D" id="3.60.20.10">
    <property type="entry name" value="Glutamine Phosphoribosylpyrophosphate, subunit 1, domain 1"/>
    <property type="match status" value="1"/>
</dbReference>
<dbReference type="InterPro" id="IPR029055">
    <property type="entry name" value="Ntn_hydrolases_N"/>
</dbReference>
<dbReference type="InterPro" id="IPR033811">
    <property type="entry name" value="Proteasome_beta_3"/>
</dbReference>
<dbReference type="InterPro" id="IPR016050">
    <property type="entry name" value="Proteasome_bsu_CS"/>
</dbReference>
<dbReference type="InterPro" id="IPR001353">
    <property type="entry name" value="Proteasome_sua/b"/>
</dbReference>
<dbReference type="InterPro" id="IPR023333">
    <property type="entry name" value="Proteasome_suB-type"/>
</dbReference>
<dbReference type="PANTHER" id="PTHR32194">
    <property type="entry name" value="METALLOPROTEASE TLDD"/>
    <property type="match status" value="1"/>
</dbReference>
<dbReference type="PANTHER" id="PTHR32194:SF10">
    <property type="entry name" value="PROTEASOME SUBUNIT BETA TYPE-3"/>
    <property type="match status" value="1"/>
</dbReference>
<dbReference type="Pfam" id="PF00227">
    <property type="entry name" value="Proteasome"/>
    <property type="match status" value="1"/>
</dbReference>
<dbReference type="SUPFAM" id="SSF56235">
    <property type="entry name" value="N-terminal nucleophile aminohydrolases (Ntn hydrolases)"/>
    <property type="match status" value="1"/>
</dbReference>
<dbReference type="PROSITE" id="PS00854">
    <property type="entry name" value="PROTEASOME_BETA_1"/>
    <property type="match status" value="1"/>
</dbReference>
<dbReference type="PROSITE" id="PS51476">
    <property type="entry name" value="PROTEASOME_BETA_2"/>
    <property type="match status" value="1"/>
</dbReference>
<comment type="function">
    <text evidence="1">Non-catalytic component of the 20S core proteasome complex involved in the proteolytic degradation of most intracellular proteins. This complex plays numerous essential roles within the cell by associating with different regulatory particles. Associated with two 19S regulatory particles, forms the 26S proteasome and thus participates in the ATP-dependent degradation of ubiquitinated proteins. The 26S proteasome plays a key role in the maintenance of protein homeostasis by removing misfolded or damaged proteins that could impair cellular functions, and by removing proteins whose functions are no longer required. Associated with the PA200 or PA28, the 20S proteasome mediates ubiquitin-independent protein degradation. This type of proteolysis is required in several pathways including spermatogenesis (20S-PA200 complex) or generation of a subset of MHC class I-presented antigenic peptides (20S-PA28 complex).</text>
</comment>
<comment type="subunit">
    <text evidence="1">The 26S proteasome consists of a 20S proteasome core and two 19S regulatory subunits. The 20S proteasome core is a barrel-shaped complex made of 28 subunits that are arranged in four stacked rings. The two outer rings are each formed by seven alpha subunits, and the two inner rings are formed by seven beta subunits. The proteolytic activity is exerted by three beta-subunits PSMB5, PSMB6 and PSMB7.</text>
</comment>
<comment type="subcellular location">
    <subcellularLocation>
        <location evidence="1">Cytoplasm</location>
    </subcellularLocation>
    <subcellularLocation>
        <location evidence="1">Nucleus</location>
    </subcellularLocation>
    <text evidence="1">Translocated from the cytoplasm into the nucleus following interaction with AKIRIN2, which bridges the proteasome with the nuclear import receptor IPO9.</text>
</comment>
<comment type="similarity">
    <text evidence="2">Belongs to the peptidase T1B family.</text>
</comment>
<organism>
    <name type="scientific">Rattus norvegicus</name>
    <name type="common">Rat</name>
    <dbReference type="NCBI Taxonomy" id="10116"/>
    <lineage>
        <taxon>Eukaryota</taxon>
        <taxon>Metazoa</taxon>
        <taxon>Chordata</taxon>
        <taxon>Craniata</taxon>
        <taxon>Vertebrata</taxon>
        <taxon>Euteleostomi</taxon>
        <taxon>Mammalia</taxon>
        <taxon>Eutheria</taxon>
        <taxon>Euarchontoglires</taxon>
        <taxon>Glires</taxon>
        <taxon>Rodentia</taxon>
        <taxon>Myomorpha</taxon>
        <taxon>Muroidea</taxon>
        <taxon>Muridae</taxon>
        <taxon>Murinae</taxon>
        <taxon>Rattus</taxon>
    </lineage>
</organism>
<keyword id="KW-0002">3D-structure</keyword>
<keyword id="KW-0007">Acetylation</keyword>
<keyword id="KW-0963">Cytoplasm</keyword>
<keyword id="KW-0903">Direct protein sequencing</keyword>
<keyword id="KW-0539">Nucleus</keyword>
<keyword id="KW-0647">Proteasome</keyword>
<keyword id="KW-1185">Reference proteome</keyword>
<protein>
    <recommendedName>
        <fullName>Proteasome subunit beta type-3</fullName>
    </recommendedName>
    <alternativeName>
        <fullName>Proteasome chain 13</fullName>
    </alternativeName>
    <alternativeName>
        <fullName>Proteasome component C10-II</fullName>
    </alternativeName>
    <alternativeName>
        <fullName>Proteasome subunit beta-3</fullName>
        <shortName>beta-3</shortName>
    </alternativeName>
    <alternativeName>
        <fullName>Proteasome theta chain</fullName>
    </alternativeName>
</protein>
<accession>P40112</accession>
<evidence type="ECO:0000250" key="1">
    <source>
        <dbReference type="UniProtKB" id="P49720"/>
    </source>
</evidence>
<evidence type="ECO:0000255" key="2">
    <source>
        <dbReference type="PROSITE-ProRule" id="PRU00809"/>
    </source>
</evidence>
<evidence type="ECO:0000269" key="3">
    <source ref="4"/>
</evidence>
<evidence type="ECO:0007829" key="4">
    <source>
        <dbReference type="PDB" id="6TU3"/>
    </source>
</evidence>
<feature type="initiator methionine" description="Removed" evidence="3">
    <location>
        <position position="1"/>
    </location>
</feature>
<feature type="chain" id="PRO_0000148059" description="Proteasome subunit beta type-3">
    <location>
        <begin position="2"/>
        <end position="205"/>
    </location>
</feature>
<feature type="modified residue" description="N-acetylserine" evidence="3">
    <location>
        <position position="2"/>
    </location>
</feature>
<feature type="modified residue" description="N6-acetyllysine" evidence="1">
    <location>
        <position position="77"/>
    </location>
</feature>
<feature type="strand" evidence="4">
    <location>
        <begin position="10"/>
        <end position="15"/>
    </location>
</feature>
<feature type="strand" evidence="4">
    <location>
        <begin position="20"/>
        <end position="25"/>
    </location>
</feature>
<feature type="strand" evidence="4">
    <location>
        <begin position="28"/>
        <end position="30"/>
    </location>
</feature>
<feature type="strand" evidence="4">
    <location>
        <begin position="33"/>
        <end position="37"/>
    </location>
</feature>
<feature type="strand" evidence="4">
    <location>
        <begin position="42"/>
        <end position="46"/>
    </location>
</feature>
<feature type="strand" evidence="4">
    <location>
        <begin position="49"/>
        <end position="55"/>
    </location>
</feature>
<feature type="helix" evidence="4">
    <location>
        <begin position="57"/>
        <end position="78"/>
    </location>
</feature>
<feature type="helix" evidence="4">
    <location>
        <begin position="84"/>
        <end position="96"/>
    </location>
</feature>
<feature type="strand" evidence="4">
    <location>
        <begin position="99"/>
        <end position="101"/>
    </location>
</feature>
<feature type="strand" evidence="4">
    <location>
        <begin position="105"/>
        <end position="112"/>
    </location>
</feature>
<feature type="turn" evidence="4">
    <location>
        <begin position="114"/>
        <end position="116"/>
    </location>
</feature>
<feature type="strand" evidence="4">
    <location>
        <begin position="119"/>
        <end position="124"/>
    </location>
</feature>
<feature type="strand" evidence="4">
    <location>
        <begin position="130"/>
        <end position="132"/>
    </location>
</feature>
<feature type="strand" evidence="4">
    <location>
        <begin position="134"/>
        <end position="141"/>
    </location>
</feature>
<feature type="helix" evidence="4">
    <location>
        <begin position="143"/>
        <end position="153"/>
    </location>
</feature>
<feature type="helix" evidence="4">
    <location>
        <begin position="160"/>
        <end position="175"/>
    </location>
</feature>
<feature type="strand" evidence="4">
    <location>
        <begin position="185"/>
        <end position="190"/>
    </location>
</feature>
<feature type="strand" evidence="4">
    <location>
        <begin position="195"/>
        <end position="200"/>
    </location>
</feature>
<gene>
    <name type="primary">Psmb3</name>
</gene>
<reference key="1">
    <citation type="journal article" date="1993" name="FEBS Lett.">
        <title>cDNA cloning of rat proteasome subunit RC10-II, assumed to be responsible for trypsin-like catalytic activity.</title>
        <authorList>
            <person name="Nishimura C."/>
            <person name="Tamura T."/>
            <person name="Akioka H."/>
            <person name="Tokunaga F."/>
            <person name="Tanaka K."/>
            <person name="Ichihara A."/>
        </authorList>
    </citation>
    <scope>NUCLEOTIDE SEQUENCE [MRNA]</scope>
    <scope>PROTEIN SEQUENCE OF 119-143</scope>
    <source>
        <tissue>Embryonic brain</tissue>
        <tissue>Liver</tissue>
    </source>
</reference>
<reference key="2">
    <citation type="journal article" date="2004" name="Genome Res.">
        <title>The status, quality, and expansion of the NIH full-length cDNA project: the Mammalian Gene Collection (MGC).</title>
        <authorList>
            <consortium name="The MGC Project Team"/>
        </authorList>
    </citation>
    <scope>NUCLEOTIDE SEQUENCE [LARGE SCALE MRNA]</scope>
    <source>
        <tissue>Brain</tissue>
    </source>
</reference>
<reference key="3">
    <citation type="submission" date="2007-04" db="UniProtKB">
        <authorList>
            <person name="Lubec G."/>
            <person name="Chen W.-Q."/>
        </authorList>
    </citation>
    <scope>PROTEIN SEQUENCE OF 28-41; 49-66 AND 100-115</scope>
    <scope>IDENTIFICATION BY MASS SPECTROMETRY</scope>
    <source>
        <strain>Sprague-Dawley</strain>
        <tissue>Hippocampus</tissue>
    </source>
</reference>
<reference key="4">
    <citation type="submission" date="2007-02" db="UniProtKB">
        <authorList>
            <person name="Lubec G."/>
            <person name="Chen W.-Q."/>
        </authorList>
    </citation>
    <scope>ACETYLATION AT SER-2</scope>
    <scope>IDENTIFICATION BY MASS SPECTROMETRY</scope>
</reference>
<proteinExistence type="evidence at protein level"/>
<sequence length="205" mass="22965">MSVMSYNGGAVMAMKGKNCVAIAADRRFGIQAQMVTTDFQKIFPMGDRLYIGLAGLATDVQTVAQRLKFRLNLYELKEGRQIKPYTLMSMVANLLYEKRFGPYYTEPVIAGLDPKTFKPFICSLDLIGCPMVTDDFVVSGTCSEQMYGMCESLWEPNMDPEHLFETISQAMLNAVDRDAVSGMGVIVHIIEKDKITTRTLKARMD</sequence>
<name>PSB3_RAT</name>